<feature type="chain" id="PRO_0000373557" description="Uncharacterized protein H171R">
    <location>
        <begin position="1"/>
        <end position="171"/>
    </location>
</feature>
<feature type="region of interest" description="Disordered" evidence="2">
    <location>
        <begin position="68"/>
        <end position="124"/>
    </location>
</feature>
<feature type="region of interest" description="Disordered" evidence="2">
    <location>
        <begin position="140"/>
        <end position="171"/>
    </location>
</feature>
<feature type="compositionally biased region" description="Basic and acidic residues" evidence="2">
    <location>
        <begin position="141"/>
        <end position="160"/>
    </location>
</feature>
<gene>
    <name type="ordered locus">War-124</name>
</gene>
<proteinExistence type="inferred from homology"/>
<comment type="subcellular location">
    <subcellularLocation>
        <location evidence="1">Virion</location>
    </subcellularLocation>
</comment>
<comment type="induction">
    <text evidence="3">Expressed in the late phase of the viral replicative cycle.</text>
</comment>
<comment type="similarity">
    <text evidence="3">Belongs to the asfivirus H171R family.</text>
</comment>
<sequence length="171" mass="19963">MVVYDLLVSLSKESIDVLRFVEANLAAFNQQYIFFNIQRKNSITTPLLITPQQEKISQIVEFLMDEYNKNNRRPSGPPREQPMHPLLPYQQSPDEQPMMPYQQPPGNDDQPYEQIYHKKHASQQVNTELSDYYQHILALGDEDKGMDSTLKLPERTKRDSDDEDGMFSIKN</sequence>
<reference key="1">
    <citation type="submission" date="2003-03" db="EMBL/GenBank/DDBJ databases">
        <title>African swine fever virus genomes.</title>
        <authorList>
            <person name="Kutish G.F."/>
            <person name="Rock D.L."/>
        </authorList>
    </citation>
    <scope>NUCLEOTIDE SEQUENCE [LARGE SCALE GENOMIC DNA]</scope>
</reference>
<organismHost>
    <name type="scientific">Ornithodoros</name>
    <name type="common">relapsing fever ticks</name>
    <dbReference type="NCBI Taxonomy" id="6937"/>
</organismHost>
<organismHost>
    <name type="scientific">Phacochoerus aethiopicus</name>
    <name type="common">Warthog</name>
    <dbReference type="NCBI Taxonomy" id="85517"/>
</organismHost>
<organismHost>
    <name type="scientific">Phacochoerus africanus</name>
    <name type="common">Warthog</name>
    <dbReference type="NCBI Taxonomy" id="41426"/>
</organismHost>
<organismHost>
    <name type="scientific">Potamochoerus larvatus</name>
    <name type="common">Bushpig</name>
    <dbReference type="NCBI Taxonomy" id="273792"/>
</organismHost>
<organismHost>
    <name type="scientific">Sus scrofa</name>
    <name type="common">Pig</name>
    <dbReference type="NCBI Taxonomy" id="9823"/>
</organismHost>
<evidence type="ECO:0000250" key="1">
    <source>
        <dbReference type="UniProtKB" id="Q65185"/>
    </source>
</evidence>
<evidence type="ECO:0000256" key="2">
    <source>
        <dbReference type="SAM" id="MobiDB-lite"/>
    </source>
</evidence>
<evidence type="ECO:0000305" key="3"/>
<keyword id="KW-0426">Late protein</keyword>
<keyword id="KW-0946">Virion</keyword>
<dbReference type="EMBL" id="AY261366">
    <property type="status" value="NOT_ANNOTATED_CDS"/>
    <property type="molecule type" value="Genomic_DNA"/>
</dbReference>
<dbReference type="SMR" id="P0CA75"/>
<dbReference type="Proteomes" id="UP000000858">
    <property type="component" value="Segment"/>
</dbReference>
<dbReference type="GO" id="GO:0044423">
    <property type="term" value="C:virion component"/>
    <property type="evidence" value="ECO:0007669"/>
    <property type="project" value="UniProtKB-KW"/>
</dbReference>
<organism>
    <name type="scientific">African swine fever virus (isolate Warthog/Namibia/Wart80/1980)</name>
    <name type="common">ASFV</name>
    <dbReference type="NCBI Taxonomy" id="561444"/>
    <lineage>
        <taxon>Viruses</taxon>
        <taxon>Varidnaviria</taxon>
        <taxon>Bamfordvirae</taxon>
        <taxon>Nucleocytoviricota</taxon>
        <taxon>Pokkesviricetes</taxon>
        <taxon>Asfuvirales</taxon>
        <taxon>Asfarviridae</taxon>
        <taxon>Asfivirus</taxon>
        <taxon>African swine fever virus</taxon>
    </lineage>
</organism>
<name>VF171_ASFWA</name>
<accession>P0CA75</accession>
<protein>
    <recommendedName>
        <fullName>Uncharacterized protein H171R</fullName>
        <shortName>pH171R</shortName>
    </recommendedName>
</protein>